<reference key="1">
    <citation type="submission" date="2006-11" db="EMBL/GenBank/DDBJ databases">
        <title>Sequence of Campylobacter fetus subsp. fetus 82-40.</title>
        <authorList>
            <person name="Fouts D.E."/>
            <person name="Nelson K.E."/>
        </authorList>
    </citation>
    <scope>NUCLEOTIDE SEQUENCE [LARGE SCALE GENOMIC DNA]</scope>
    <source>
        <strain>82-40</strain>
    </source>
</reference>
<proteinExistence type="inferred from homology"/>
<name>RPOC_CAMFF</name>
<feature type="chain" id="PRO_0000308824" description="DNA-directed RNA polymerase subunit beta'">
    <location>
        <begin position="1"/>
        <end position="1508"/>
    </location>
</feature>
<feature type="binding site" evidence="1">
    <location>
        <position position="71"/>
    </location>
    <ligand>
        <name>Zn(2+)</name>
        <dbReference type="ChEBI" id="CHEBI:29105"/>
        <label>1</label>
    </ligand>
</feature>
<feature type="binding site" evidence="1">
    <location>
        <position position="73"/>
    </location>
    <ligand>
        <name>Zn(2+)</name>
        <dbReference type="ChEBI" id="CHEBI:29105"/>
        <label>1</label>
    </ligand>
</feature>
<feature type="binding site" evidence="1">
    <location>
        <position position="86"/>
    </location>
    <ligand>
        <name>Zn(2+)</name>
        <dbReference type="ChEBI" id="CHEBI:29105"/>
        <label>1</label>
    </ligand>
</feature>
<feature type="binding site" evidence="1">
    <location>
        <position position="89"/>
    </location>
    <ligand>
        <name>Zn(2+)</name>
        <dbReference type="ChEBI" id="CHEBI:29105"/>
        <label>1</label>
    </ligand>
</feature>
<feature type="binding site" evidence="1">
    <location>
        <position position="470"/>
    </location>
    <ligand>
        <name>Mg(2+)</name>
        <dbReference type="ChEBI" id="CHEBI:18420"/>
    </ligand>
</feature>
<feature type="binding site" evidence="1">
    <location>
        <position position="472"/>
    </location>
    <ligand>
        <name>Mg(2+)</name>
        <dbReference type="ChEBI" id="CHEBI:18420"/>
    </ligand>
</feature>
<feature type="binding site" evidence="1">
    <location>
        <position position="474"/>
    </location>
    <ligand>
        <name>Mg(2+)</name>
        <dbReference type="ChEBI" id="CHEBI:18420"/>
    </ligand>
</feature>
<feature type="binding site" evidence="1">
    <location>
        <position position="804"/>
    </location>
    <ligand>
        <name>Zn(2+)</name>
        <dbReference type="ChEBI" id="CHEBI:29105"/>
        <label>2</label>
    </ligand>
</feature>
<feature type="binding site" evidence="1">
    <location>
        <position position="878"/>
    </location>
    <ligand>
        <name>Zn(2+)</name>
        <dbReference type="ChEBI" id="CHEBI:29105"/>
        <label>2</label>
    </ligand>
</feature>
<feature type="binding site" evidence="1">
    <location>
        <position position="885"/>
    </location>
    <ligand>
        <name>Zn(2+)</name>
        <dbReference type="ChEBI" id="CHEBI:29105"/>
        <label>2</label>
    </ligand>
</feature>
<feature type="binding site" evidence="1">
    <location>
        <position position="888"/>
    </location>
    <ligand>
        <name>Zn(2+)</name>
        <dbReference type="ChEBI" id="CHEBI:29105"/>
        <label>2</label>
    </ligand>
</feature>
<keyword id="KW-0240">DNA-directed RNA polymerase</keyword>
<keyword id="KW-0460">Magnesium</keyword>
<keyword id="KW-0479">Metal-binding</keyword>
<keyword id="KW-0548">Nucleotidyltransferase</keyword>
<keyword id="KW-0804">Transcription</keyword>
<keyword id="KW-0808">Transferase</keyword>
<keyword id="KW-0862">Zinc</keyword>
<evidence type="ECO:0000255" key="1">
    <source>
        <dbReference type="HAMAP-Rule" id="MF_01322"/>
    </source>
</evidence>
<accession>A0RQI4</accession>
<gene>
    <name evidence="1" type="primary">rpoC</name>
    <name type="ordered locus">CFF8240_1314</name>
</gene>
<organism>
    <name type="scientific">Campylobacter fetus subsp. fetus (strain 82-40)</name>
    <dbReference type="NCBI Taxonomy" id="360106"/>
    <lineage>
        <taxon>Bacteria</taxon>
        <taxon>Pseudomonadati</taxon>
        <taxon>Campylobacterota</taxon>
        <taxon>Epsilonproteobacteria</taxon>
        <taxon>Campylobacterales</taxon>
        <taxon>Campylobacteraceae</taxon>
        <taxon>Campylobacter</taxon>
    </lineage>
</organism>
<sequence length="1508" mass="168011">MSELKPIEIKEDAKPRDFEAFQLRLASPDRIKAWSHGEVKKPETINYRTLKPERDGLFCAKIFGPIRDYECLCGKYKKMRYKGIKCEKCGVEVTTSKVRRSRMGHIELVTPVAHIWYVNSLPSRIGTLLGIKMKDLERVLYYEAYIVENPGDAFYDNENSKKVDLYDVLNEEQYVLLEQKFSESGFKARMGGEVIRDLLASLDLVSILDQLKIEIESTNSEAKKKTIVKRLKVVESFLNSGNRPEWMMITNLPVLPPDLRPLVSLDGGKFAVSDVNDLYRRVINRNTRLKRLMELDAPEIIIRNEKRMLQEAVDALFDNGRRANAVKGANKRPLKSLSEIIKGKQGRFRQNLLGKRVDFSGRSVIVVGPKLRMDQCGLPKKMALELFKPHLLARLEEKGYATTVKQAKKMIEDKTNEVWECLEEVVADHPVMLNRAPTLHKMSIQAFHPVLIEGKAIQLHPLVCSAFNADFDGDQMAVHVPLSQEAIAECKILMLSSMNILLPASGKAVTVPSQDMVLGIYYLSLEKNEAVGANKIFASVDEVMIAVEAHYLDLHAKIKTMVEGRTVFTTAGRLIIKSILPNLKENSVPESMWNKVMKKKDIANLVDYVYKNGGLEVTAGFLDKLKNLGFRYATKAGISISIADIIIPESKYSYVDEAKKRVREIQNQYGSGLLTDSERYNKIVDIWTDTNNKVAAEMMKLIKTDKSGFNSIYMMADSGARGSAAQIRQLAGMRGLMAKPDGSIIETPITSNFREGLNVLEYFISTHGARKGLADTALKTANAGYLTRKLIDVAQNVKVTMDDCGTHEGVEITEITENGELIESLEERVLGRVLSDDVIDPITNEILFTEGTLIDEVKARTITDAGIKSVSIRTPITCKASKGVCSKCYGINLGEGKLVKPGEAVGIISAQSIGEPGTQLTLRTFHIGGTASTEQQDRQVVAQKEGFIRYYNLKTYENNNKFIVTNRRNAAILLVEPKIKAPFDGEINIEVAHEDINVIIKGKSDEVKYVLRKHDLAKPNELAGVSGKVEGKFYIPYIKGDKVKENESIVEVIKEGWNVPNRIPFASEVKVADGDPVTQDILSGANGVLKFYILKGDYLERIKNVKKGDMVSEKGLFVVIADDDDREAVRHYIPRNSVIKFNDSDIVSAKDTIAKPQDGSKLVIAEWDPYSTPVIAEEAGTVAYEDIEPGYSVAEQYDEATGESRLVINEYLPSGVKPTIVISTKSGKLIRYQLEPKTAIFVKDGAEVSRADTIAKTPKAVAKSKDITGGLPRVSELFEARRPKNTAIIAEIDGTIKFDKPLRSKERIIIMAEDGSSAEYLIDKSRQIQVRDGEFVHAGEKLTDGLVSSHDVLRILGEKALHYYLISEIQQVYRSQGVAISDKHIEIIVSQMLRQVKIVDSGHTNFIVGDMVSRRKFREENDRIMKIGGEPAIAEPVLLGVTRAAIGSDSVISAASFQETTKVLTEASIAAKFDYLEDLKENVILGRMIPVGTGLYQDKKVKIKINED</sequence>
<dbReference type="EC" id="2.7.7.6" evidence="1"/>
<dbReference type="EMBL" id="CP000487">
    <property type="protein sequence ID" value="ABK82615.1"/>
    <property type="molecule type" value="Genomic_DNA"/>
</dbReference>
<dbReference type="RefSeq" id="WP_011732162.1">
    <property type="nucleotide sequence ID" value="NC_008599.1"/>
</dbReference>
<dbReference type="SMR" id="A0RQI4"/>
<dbReference type="GeneID" id="61065133"/>
<dbReference type="KEGG" id="cff:CFF8240_1314"/>
<dbReference type="eggNOG" id="COG0086">
    <property type="taxonomic scope" value="Bacteria"/>
</dbReference>
<dbReference type="HOGENOM" id="CLU_000524_3_1_7"/>
<dbReference type="Proteomes" id="UP000000760">
    <property type="component" value="Chromosome"/>
</dbReference>
<dbReference type="GO" id="GO:0000428">
    <property type="term" value="C:DNA-directed RNA polymerase complex"/>
    <property type="evidence" value="ECO:0007669"/>
    <property type="project" value="UniProtKB-KW"/>
</dbReference>
<dbReference type="GO" id="GO:0003677">
    <property type="term" value="F:DNA binding"/>
    <property type="evidence" value="ECO:0007669"/>
    <property type="project" value="UniProtKB-UniRule"/>
</dbReference>
<dbReference type="GO" id="GO:0003899">
    <property type="term" value="F:DNA-directed RNA polymerase activity"/>
    <property type="evidence" value="ECO:0007669"/>
    <property type="project" value="UniProtKB-UniRule"/>
</dbReference>
<dbReference type="GO" id="GO:0000287">
    <property type="term" value="F:magnesium ion binding"/>
    <property type="evidence" value="ECO:0007669"/>
    <property type="project" value="UniProtKB-UniRule"/>
</dbReference>
<dbReference type="GO" id="GO:0008270">
    <property type="term" value="F:zinc ion binding"/>
    <property type="evidence" value="ECO:0007669"/>
    <property type="project" value="UniProtKB-UniRule"/>
</dbReference>
<dbReference type="GO" id="GO:0006351">
    <property type="term" value="P:DNA-templated transcription"/>
    <property type="evidence" value="ECO:0007669"/>
    <property type="project" value="UniProtKB-UniRule"/>
</dbReference>
<dbReference type="CDD" id="cd02655">
    <property type="entry name" value="RNAP_beta'_C"/>
    <property type="match status" value="1"/>
</dbReference>
<dbReference type="CDD" id="cd01609">
    <property type="entry name" value="RNAP_beta'_N"/>
    <property type="match status" value="1"/>
</dbReference>
<dbReference type="FunFam" id="1.10.132.30:FF:000003">
    <property type="entry name" value="DNA-directed RNA polymerase subunit beta"/>
    <property type="match status" value="1"/>
</dbReference>
<dbReference type="Gene3D" id="1.10.132.30">
    <property type="match status" value="1"/>
</dbReference>
<dbReference type="Gene3D" id="1.10.150.390">
    <property type="match status" value="1"/>
</dbReference>
<dbReference type="Gene3D" id="1.10.1790.20">
    <property type="match status" value="1"/>
</dbReference>
<dbReference type="Gene3D" id="1.10.40.90">
    <property type="match status" value="1"/>
</dbReference>
<dbReference type="Gene3D" id="2.40.40.20">
    <property type="match status" value="1"/>
</dbReference>
<dbReference type="Gene3D" id="2.40.50.100">
    <property type="match status" value="3"/>
</dbReference>
<dbReference type="Gene3D" id="4.10.860.120">
    <property type="entry name" value="RNA polymerase II, clamp domain"/>
    <property type="match status" value="1"/>
</dbReference>
<dbReference type="Gene3D" id="1.10.274.100">
    <property type="entry name" value="RNA polymerase Rpb1, domain 3"/>
    <property type="match status" value="2"/>
</dbReference>
<dbReference type="HAMAP" id="MF_01322">
    <property type="entry name" value="RNApol_bact_RpoC"/>
    <property type="match status" value="1"/>
</dbReference>
<dbReference type="InterPro" id="IPR045867">
    <property type="entry name" value="DNA-dir_RpoC_beta_prime"/>
</dbReference>
<dbReference type="InterPro" id="IPR012754">
    <property type="entry name" value="DNA-dir_RpoC_beta_prime_bact"/>
</dbReference>
<dbReference type="InterPro" id="IPR000722">
    <property type="entry name" value="RNA_pol_asu"/>
</dbReference>
<dbReference type="InterPro" id="IPR006592">
    <property type="entry name" value="RNA_pol_N"/>
</dbReference>
<dbReference type="InterPro" id="IPR007080">
    <property type="entry name" value="RNA_pol_Rpb1_1"/>
</dbReference>
<dbReference type="InterPro" id="IPR007066">
    <property type="entry name" value="RNA_pol_Rpb1_3"/>
</dbReference>
<dbReference type="InterPro" id="IPR042102">
    <property type="entry name" value="RNA_pol_Rpb1_3_sf"/>
</dbReference>
<dbReference type="InterPro" id="IPR007083">
    <property type="entry name" value="RNA_pol_Rpb1_4"/>
</dbReference>
<dbReference type="InterPro" id="IPR007081">
    <property type="entry name" value="RNA_pol_Rpb1_5"/>
</dbReference>
<dbReference type="InterPro" id="IPR044893">
    <property type="entry name" value="RNA_pol_Rpb1_clamp_domain"/>
</dbReference>
<dbReference type="InterPro" id="IPR038120">
    <property type="entry name" value="Rpb1_funnel_sf"/>
</dbReference>
<dbReference type="NCBIfam" id="TIGR02386">
    <property type="entry name" value="rpoC_TIGR"/>
    <property type="match status" value="1"/>
</dbReference>
<dbReference type="PANTHER" id="PTHR19376">
    <property type="entry name" value="DNA-DIRECTED RNA POLYMERASE"/>
    <property type="match status" value="1"/>
</dbReference>
<dbReference type="PANTHER" id="PTHR19376:SF54">
    <property type="entry name" value="DNA-DIRECTED RNA POLYMERASE SUBUNIT BETA"/>
    <property type="match status" value="1"/>
</dbReference>
<dbReference type="Pfam" id="PF04997">
    <property type="entry name" value="RNA_pol_Rpb1_1"/>
    <property type="match status" value="1"/>
</dbReference>
<dbReference type="Pfam" id="PF00623">
    <property type="entry name" value="RNA_pol_Rpb1_2"/>
    <property type="match status" value="1"/>
</dbReference>
<dbReference type="Pfam" id="PF04983">
    <property type="entry name" value="RNA_pol_Rpb1_3"/>
    <property type="match status" value="1"/>
</dbReference>
<dbReference type="Pfam" id="PF05000">
    <property type="entry name" value="RNA_pol_Rpb1_4"/>
    <property type="match status" value="1"/>
</dbReference>
<dbReference type="Pfam" id="PF04998">
    <property type="entry name" value="RNA_pol_Rpb1_5"/>
    <property type="match status" value="1"/>
</dbReference>
<dbReference type="SMART" id="SM00663">
    <property type="entry name" value="RPOLA_N"/>
    <property type="match status" value="1"/>
</dbReference>
<dbReference type="SUPFAM" id="SSF64484">
    <property type="entry name" value="beta and beta-prime subunits of DNA dependent RNA-polymerase"/>
    <property type="match status" value="1"/>
</dbReference>
<comment type="function">
    <text evidence="1">DNA-dependent RNA polymerase catalyzes the transcription of DNA into RNA using the four ribonucleoside triphosphates as substrates.</text>
</comment>
<comment type="catalytic activity">
    <reaction evidence="1">
        <text>RNA(n) + a ribonucleoside 5'-triphosphate = RNA(n+1) + diphosphate</text>
        <dbReference type="Rhea" id="RHEA:21248"/>
        <dbReference type="Rhea" id="RHEA-COMP:14527"/>
        <dbReference type="Rhea" id="RHEA-COMP:17342"/>
        <dbReference type="ChEBI" id="CHEBI:33019"/>
        <dbReference type="ChEBI" id="CHEBI:61557"/>
        <dbReference type="ChEBI" id="CHEBI:140395"/>
        <dbReference type="EC" id="2.7.7.6"/>
    </reaction>
</comment>
<comment type="cofactor">
    <cofactor evidence="1">
        <name>Mg(2+)</name>
        <dbReference type="ChEBI" id="CHEBI:18420"/>
    </cofactor>
    <text evidence="1">Binds 1 Mg(2+) ion per subunit.</text>
</comment>
<comment type="cofactor">
    <cofactor evidence="1">
        <name>Zn(2+)</name>
        <dbReference type="ChEBI" id="CHEBI:29105"/>
    </cofactor>
    <text evidence="1">Binds 2 Zn(2+) ions per subunit.</text>
</comment>
<comment type="subunit">
    <text evidence="1">The RNAP catalytic core consists of 2 alpha, 1 beta, 1 beta' and 1 omega subunit. When a sigma factor is associated with the core the holoenzyme is formed, which can initiate transcription.</text>
</comment>
<comment type="similarity">
    <text evidence="1">Belongs to the RNA polymerase beta' chain family.</text>
</comment>
<protein>
    <recommendedName>
        <fullName evidence="1">DNA-directed RNA polymerase subunit beta'</fullName>
        <shortName evidence="1">RNAP subunit beta'</shortName>
        <ecNumber evidence="1">2.7.7.6</ecNumber>
    </recommendedName>
    <alternativeName>
        <fullName evidence="1">RNA polymerase subunit beta'</fullName>
    </alternativeName>
    <alternativeName>
        <fullName evidence="1">Transcriptase subunit beta'</fullName>
    </alternativeName>
</protein>